<comment type="function">
    <text evidence="1">Catalyzes the stereoinversion of LL-2,6-diaminopimelate (L,L-DAP) to meso-diaminopimelate (meso-DAP), a precursor of L-lysine and an essential component of the bacterial peptidoglycan.</text>
</comment>
<comment type="catalytic activity">
    <reaction evidence="1">
        <text>(2S,6S)-2,6-diaminopimelate = meso-2,6-diaminopimelate</text>
        <dbReference type="Rhea" id="RHEA:15393"/>
        <dbReference type="ChEBI" id="CHEBI:57609"/>
        <dbReference type="ChEBI" id="CHEBI:57791"/>
        <dbReference type="EC" id="5.1.1.7"/>
    </reaction>
</comment>
<comment type="pathway">
    <text evidence="1">Amino-acid biosynthesis; L-lysine biosynthesis via DAP pathway; DL-2,6-diaminopimelate from LL-2,6-diaminopimelate: step 1/1.</text>
</comment>
<comment type="subunit">
    <text evidence="1">Homodimer.</text>
</comment>
<comment type="subcellular location">
    <subcellularLocation>
        <location evidence="1">Cytoplasm</location>
    </subcellularLocation>
</comment>
<comment type="similarity">
    <text evidence="1">Belongs to the diaminopimelate epimerase family.</text>
</comment>
<accession>O32114</accession>
<evidence type="ECO:0000255" key="1">
    <source>
        <dbReference type="HAMAP-Rule" id="MF_00197"/>
    </source>
</evidence>
<reference key="1">
    <citation type="journal article" date="1997" name="Nature">
        <title>The complete genome sequence of the Gram-positive bacterium Bacillus subtilis.</title>
        <authorList>
            <person name="Kunst F."/>
            <person name="Ogasawara N."/>
            <person name="Moszer I."/>
            <person name="Albertini A.M."/>
            <person name="Alloni G."/>
            <person name="Azevedo V."/>
            <person name="Bertero M.G."/>
            <person name="Bessieres P."/>
            <person name="Bolotin A."/>
            <person name="Borchert S."/>
            <person name="Borriss R."/>
            <person name="Boursier L."/>
            <person name="Brans A."/>
            <person name="Braun M."/>
            <person name="Brignell S.C."/>
            <person name="Bron S."/>
            <person name="Brouillet S."/>
            <person name="Bruschi C.V."/>
            <person name="Caldwell B."/>
            <person name="Capuano V."/>
            <person name="Carter N.M."/>
            <person name="Choi S.-K."/>
            <person name="Codani J.-J."/>
            <person name="Connerton I.F."/>
            <person name="Cummings N.J."/>
            <person name="Daniel R.A."/>
            <person name="Denizot F."/>
            <person name="Devine K.M."/>
            <person name="Duesterhoeft A."/>
            <person name="Ehrlich S.D."/>
            <person name="Emmerson P.T."/>
            <person name="Entian K.-D."/>
            <person name="Errington J."/>
            <person name="Fabret C."/>
            <person name="Ferrari E."/>
            <person name="Foulger D."/>
            <person name="Fritz C."/>
            <person name="Fujita M."/>
            <person name="Fujita Y."/>
            <person name="Fuma S."/>
            <person name="Galizzi A."/>
            <person name="Galleron N."/>
            <person name="Ghim S.-Y."/>
            <person name="Glaser P."/>
            <person name="Goffeau A."/>
            <person name="Golightly E.J."/>
            <person name="Grandi G."/>
            <person name="Guiseppi G."/>
            <person name="Guy B.J."/>
            <person name="Haga K."/>
            <person name="Haiech J."/>
            <person name="Harwood C.R."/>
            <person name="Henaut A."/>
            <person name="Hilbert H."/>
            <person name="Holsappel S."/>
            <person name="Hosono S."/>
            <person name="Hullo M.-F."/>
            <person name="Itaya M."/>
            <person name="Jones L.-M."/>
            <person name="Joris B."/>
            <person name="Karamata D."/>
            <person name="Kasahara Y."/>
            <person name="Klaerr-Blanchard M."/>
            <person name="Klein C."/>
            <person name="Kobayashi Y."/>
            <person name="Koetter P."/>
            <person name="Koningstein G."/>
            <person name="Krogh S."/>
            <person name="Kumano M."/>
            <person name="Kurita K."/>
            <person name="Lapidus A."/>
            <person name="Lardinois S."/>
            <person name="Lauber J."/>
            <person name="Lazarevic V."/>
            <person name="Lee S.-M."/>
            <person name="Levine A."/>
            <person name="Liu H."/>
            <person name="Masuda S."/>
            <person name="Mauel C."/>
            <person name="Medigue C."/>
            <person name="Medina N."/>
            <person name="Mellado R.P."/>
            <person name="Mizuno M."/>
            <person name="Moestl D."/>
            <person name="Nakai S."/>
            <person name="Noback M."/>
            <person name="Noone D."/>
            <person name="O'Reilly M."/>
            <person name="Ogawa K."/>
            <person name="Ogiwara A."/>
            <person name="Oudega B."/>
            <person name="Park S.-H."/>
            <person name="Parro V."/>
            <person name="Pohl T.M."/>
            <person name="Portetelle D."/>
            <person name="Porwollik S."/>
            <person name="Prescott A.M."/>
            <person name="Presecan E."/>
            <person name="Pujic P."/>
            <person name="Purnelle B."/>
            <person name="Rapoport G."/>
            <person name="Rey M."/>
            <person name="Reynolds S."/>
            <person name="Rieger M."/>
            <person name="Rivolta C."/>
            <person name="Rocha E."/>
            <person name="Roche B."/>
            <person name="Rose M."/>
            <person name="Sadaie Y."/>
            <person name="Sato T."/>
            <person name="Scanlan E."/>
            <person name="Schleich S."/>
            <person name="Schroeter R."/>
            <person name="Scoffone F."/>
            <person name="Sekiguchi J."/>
            <person name="Sekowska A."/>
            <person name="Seror S.J."/>
            <person name="Serror P."/>
            <person name="Shin B.-S."/>
            <person name="Soldo B."/>
            <person name="Sorokin A."/>
            <person name="Tacconi E."/>
            <person name="Takagi T."/>
            <person name="Takahashi H."/>
            <person name="Takemaru K."/>
            <person name="Takeuchi M."/>
            <person name="Tamakoshi A."/>
            <person name="Tanaka T."/>
            <person name="Terpstra P."/>
            <person name="Tognoni A."/>
            <person name="Tosato V."/>
            <person name="Uchiyama S."/>
            <person name="Vandenbol M."/>
            <person name="Vannier F."/>
            <person name="Vassarotti A."/>
            <person name="Viari A."/>
            <person name="Wambutt R."/>
            <person name="Wedler E."/>
            <person name="Wedler H."/>
            <person name="Weitzenegger T."/>
            <person name="Winters P."/>
            <person name="Wipat A."/>
            <person name="Yamamoto H."/>
            <person name="Yamane K."/>
            <person name="Yasumoto K."/>
            <person name="Yata K."/>
            <person name="Yoshida K."/>
            <person name="Yoshikawa H.-F."/>
            <person name="Zumstein E."/>
            <person name="Yoshikawa H."/>
            <person name="Danchin A."/>
        </authorList>
    </citation>
    <scope>NUCLEOTIDE SEQUENCE [LARGE SCALE GENOMIC DNA]</scope>
    <source>
        <strain>168</strain>
    </source>
</reference>
<name>DAPF_BACSU</name>
<dbReference type="EC" id="5.1.1.7" evidence="1"/>
<dbReference type="EMBL" id="AL009126">
    <property type="protein sequence ID" value="CAB15207.1"/>
    <property type="molecule type" value="Genomic_DNA"/>
</dbReference>
<dbReference type="PIR" id="F70024">
    <property type="entry name" value="F70024"/>
</dbReference>
<dbReference type="RefSeq" id="NP_391097.1">
    <property type="nucleotide sequence ID" value="NC_000964.3"/>
</dbReference>
<dbReference type="RefSeq" id="WP_003243745.1">
    <property type="nucleotide sequence ID" value="NZ_OZ025638.1"/>
</dbReference>
<dbReference type="SMR" id="O32114"/>
<dbReference type="FunCoup" id="O32114">
    <property type="interactions" value="635"/>
</dbReference>
<dbReference type="STRING" id="224308.BSU32170"/>
<dbReference type="jPOST" id="O32114"/>
<dbReference type="PaxDb" id="224308-BSU32170"/>
<dbReference type="EnsemblBacteria" id="CAB15207">
    <property type="protein sequence ID" value="CAB15207"/>
    <property type="gene ID" value="BSU_32170"/>
</dbReference>
<dbReference type="GeneID" id="937110"/>
<dbReference type="KEGG" id="bsu:BSU32170"/>
<dbReference type="PATRIC" id="fig|224308.179.peg.3483"/>
<dbReference type="eggNOG" id="COG0253">
    <property type="taxonomic scope" value="Bacteria"/>
</dbReference>
<dbReference type="InParanoid" id="O32114"/>
<dbReference type="OrthoDB" id="9805408at2"/>
<dbReference type="PhylomeDB" id="O32114"/>
<dbReference type="BioCyc" id="BSUB:BSU32170-MONOMER"/>
<dbReference type="UniPathway" id="UPA00034">
    <property type="reaction ID" value="UER00025"/>
</dbReference>
<dbReference type="Proteomes" id="UP000001570">
    <property type="component" value="Chromosome"/>
</dbReference>
<dbReference type="GO" id="GO:0005829">
    <property type="term" value="C:cytosol"/>
    <property type="evidence" value="ECO:0000318"/>
    <property type="project" value="GO_Central"/>
</dbReference>
<dbReference type="GO" id="GO:0008837">
    <property type="term" value="F:diaminopimelate epimerase activity"/>
    <property type="evidence" value="ECO:0000318"/>
    <property type="project" value="GO_Central"/>
</dbReference>
<dbReference type="GO" id="GO:0009089">
    <property type="term" value="P:lysine biosynthetic process via diaminopimelate"/>
    <property type="evidence" value="ECO:0000318"/>
    <property type="project" value="GO_Central"/>
</dbReference>
<dbReference type="FunFam" id="3.10.310.10:FF:000004">
    <property type="entry name" value="Diaminopimelate epimerase"/>
    <property type="match status" value="1"/>
</dbReference>
<dbReference type="FunFam" id="3.10.310.10:FF:000006">
    <property type="entry name" value="Diaminopimelate epimerase"/>
    <property type="match status" value="1"/>
</dbReference>
<dbReference type="Gene3D" id="3.10.310.10">
    <property type="entry name" value="Diaminopimelate Epimerase, Chain A, domain 1"/>
    <property type="match status" value="2"/>
</dbReference>
<dbReference type="HAMAP" id="MF_00197">
    <property type="entry name" value="DAP_epimerase"/>
    <property type="match status" value="1"/>
</dbReference>
<dbReference type="InterPro" id="IPR018510">
    <property type="entry name" value="DAP_epimerase_AS"/>
</dbReference>
<dbReference type="InterPro" id="IPR001653">
    <property type="entry name" value="DAP_epimerase_DapF"/>
</dbReference>
<dbReference type="NCBIfam" id="TIGR00652">
    <property type="entry name" value="DapF"/>
    <property type="match status" value="1"/>
</dbReference>
<dbReference type="PANTHER" id="PTHR31689:SF0">
    <property type="entry name" value="DIAMINOPIMELATE EPIMERASE"/>
    <property type="match status" value="1"/>
</dbReference>
<dbReference type="PANTHER" id="PTHR31689">
    <property type="entry name" value="DIAMINOPIMELATE EPIMERASE, CHLOROPLASTIC"/>
    <property type="match status" value="1"/>
</dbReference>
<dbReference type="Pfam" id="PF01678">
    <property type="entry name" value="DAP_epimerase"/>
    <property type="match status" value="2"/>
</dbReference>
<dbReference type="SUPFAM" id="SSF54506">
    <property type="entry name" value="Diaminopimelate epimerase-like"/>
    <property type="match status" value="1"/>
</dbReference>
<dbReference type="PROSITE" id="PS01326">
    <property type="entry name" value="DAP_EPIMERASE"/>
    <property type="match status" value="1"/>
</dbReference>
<keyword id="KW-0028">Amino-acid biosynthesis</keyword>
<keyword id="KW-0963">Cytoplasm</keyword>
<keyword id="KW-0413">Isomerase</keyword>
<keyword id="KW-0457">Lysine biosynthesis</keyword>
<keyword id="KW-1185">Reference proteome</keyword>
<proteinExistence type="inferred from homology"/>
<protein>
    <recommendedName>
        <fullName evidence="1">Diaminopimelate epimerase</fullName>
        <shortName evidence="1">DAP epimerase</shortName>
        <ecNumber evidence="1">5.1.1.7</ecNumber>
    </recommendedName>
    <alternativeName>
        <fullName evidence="1">PLP-independent amino acid racemase</fullName>
    </alternativeName>
</protein>
<gene>
    <name evidence="1" type="primary">dapF</name>
    <name type="synonym">yutL</name>
    <name type="ordered locus">BSU32170</name>
</gene>
<sequence>MNSFRFTKMHGLGNSYIYVNQFEEQLPEEKLSEIAIQVSSVYTGIGSDGMILICPSDQAPVKMRIFNNDGSEGKNCGNGLRCVAKYAYEHKLVEETSFLIETLSGLVKAEVQVENGKVNVVTVDMGEPRLTKSELPMLDGGEEHTINETMAFGEVELTGTAVSMGNPHIVFPIADIEQAPLTTLGPVIEKDPRFPEGINVEFVETVNEQELHFRVWERGSGITQACGTGACAAAVASVLNGVSKRNQDITVHLAGGDLVINWKDNGHVMMTGPAETVCEGVYFL</sequence>
<feature type="chain" id="PRO_0000149820" description="Diaminopimelate epimerase">
    <location>
        <begin position="1"/>
        <end position="284"/>
    </location>
</feature>
<feature type="active site" description="Proton donor" evidence="1">
    <location>
        <position position="76"/>
    </location>
</feature>
<feature type="active site" description="Proton acceptor" evidence="1">
    <location>
        <position position="226"/>
    </location>
</feature>
<feature type="binding site" evidence="1">
    <location>
        <position position="14"/>
    </location>
    <ligand>
        <name>substrate</name>
    </ligand>
</feature>
<feature type="binding site" evidence="1">
    <location>
        <position position="67"/>
    </location>
    <ligand>
        <name>substrate</name>
    </ligand>
</feature>
<feature type="binding site" evidence="1">
    <location>
        <begin position="77"/>
        <end position="78"/>
    </location>
    <ligand>
        <name>substrate</name>
    </ligand>
</feature>
<feature type="binding site" evidence="1">
    <location>
        <position position="166"/>
    </location>
    <ligand>
        <name>substrate</name>
    </ligand>
</feature>
<feature type="binding site" evidence="1">
    <location>
        <position position="199"/>
    </location>
    <ligand>
        <name>substrate</name>
    </ligand>
</feature>
<feature type="binding site" evidence="1">
    <location>
        <begin position="217"/>
        <end position="218"/>
    </location>
    <ligand>
        <name>substrate</name>
    </ligand>
</feature>
<feature type="binding site" evidence="1">
    <location>
        <begin position="227"/>
        <end position="228"/>
    </location>
    <ligand>
        <name>substrate</name>
    </ligand>
</feature>
<feature type="site" description="Could be important to modulate the pK values of the two catalytic cysteine residues" evidence="1">
    <location>
        <position position="168"/>
    </location>
</feature>
<feature type="site" description="Could be important to modulate the pK values of the two catalytic cysteine residues" evidence="1">
    <location>
        <position position="217"/>
    </location>
</feature>
<organism>
    <name type="scientific">Bacillus subtilis (strain 168)</name>
    <dbReference type="NCBI Taxonomy" id="224308"/>
    <lineage>
        <taxon>Bacteria</taxon>
        <taxon>Bacillati</taxon>
        <taxon>Bacillota</taxon>
        <taxon>Bacilli</taxon>
        <taxon>Bacillales</taxon>
        <taxon>Bacillaceae</taxon>
        <taxon>Bacillus</taxon>
    </lineage>
</organism>